<protein>
    <recommendedName>
        <fullName evidence="4">Doublecortin domain-containing protein</fullName>
        <shortName evidence="4">TgDCX</shortName>
    </recommendedName>
</protein>
<organism evidence="8">
    <name type="scientific">Toxoplasma gondii (strain ATCC 50861 / VEG)</name>
    <dbReference type="NCBI Taxonomy" id="432359"/>
    <lineage>
        <taxon>Eukaryota</taxon>
        <taxon>Sar</taxon>
        <taxon>Alveolata</taxon>
        <taxon>Apicomplexa</taxon>
        <taxon>Conoidasida</taxon>
        <taxon>Coccidia</taxon>
        <taxon>Eucoccidiorida</taxon>
        <taxon>Eimeriorina</taxon>
        <taxon>Sarcocystidae</taxon>
        <taxon>Toxoplasma</taxon>
    </lineage>
</organism>
<accession>B6KAS6</accession>
<accession>A0A0F7UX87</accession>
<accession>B9QC02</accession>
<accession>S7WFE6</accession>
<accession>S8F0J1</accession>
<gene>
    <name evidence="4" type="primary">DCX</name>
    <name evidence="6" type="ORF">BN1205_078130</name>
    <name evidence="7" type="ORF">TGVEG_256030</name>
</gene>
<proteinExistence type="evidence at protein level"/>
<dbReference type="EMBL" id="LN714497">
    <property type="protein sequence ID" value="CEL74611.1"/>
    <property type="molecule type" value="Genomic_DNA"/>
</dbReference>
<dbReference type="EMBL" id="AAYL02000031">
    <property type="protein sequence ID" value="ESS35450.1"/>
    <property type="molecule type" value="Genomic_DNA"/>
</dbReference>
<dbReference type="PDB" id="6B4A">
    <property type="method" value="X-ray"/>
    <property type="resolution" value="2.00 A"/>
    <property type="chains" value="A/B=148-243"/>
</dbReference>
<dbReference type="PDBsum" id="6B4A"/>
<dbReference type="SMR" id="B6KAS6"/>
<dbReference type="PaxDb" id="5811-TGME49_056030"/>
<dbReference type="EnsemblProtists" id="ESS35450">
    <property type="protein sequence ID" value="ESS35450"/>
    <property type="gene ID" value="TGVEG_256030"/>
</dbReference>
<dbReference type="VEuPathDB" id="ToxoDB:TGVEG_256030"/>
<dbReference type="eggNOG" id="ENOG502S25E">
    <property type="taxonomic scope" value="Eukaryota"/>
</dbReference>
<dbReference type="OMA" id="FRNGDEH"/>
<dbReference type="Proteomes" id="UP000002226">
    <property type="component" value="Partially assembled WGS sequence"/>
</dbReference>
<dbReference type="GO" id="GO:0005737">
    <property type="term" value="C:cytoplasm"/>
    <property type="evidence" value="ECO:0007669"/>
    <property type="project" value="UniProtKB-KW"/>
</dbReference>
<dbReference type="GO" id="GO:0005856">
    <property type="term" value="C:cytoskeleton"/>
    <property type="evidence" value="ECO:0007669"/>
    <property type="project" value="UniProtKB-SubCell"/>
</dbReference>
<dbReference type="GO" id="GO:0015631">
    <property type="term" value="F:tubulin binding"/>
    <property type="evidence" value="ECO:0007669"/>
    <property type="project" value="InterPro"/>
</dbReference>
<dbReference type="GO" id="GO:0035556">
    <property type="term" value="P:intracellular signal transduction"/>
    <property type="evidence" value="ECO:0007669"/>
    <property type="project" value="InterPro"/>
</dbReference>
<dbReference type="GO" id="GO:0046785">
    <property type="term" value="P:microtubule polymerization"/>
    <property type="evidence" value="ECO:0007669"/>
    <property type="project" value="InterPro"/>
</dbReference>
<dbReference type="CDD" id="cd01617">
    <property type="entry name" value="DCX"/>
    <property type="match status" value="1"/>
</dbReference>
<dbReference type="Gene3D" id="3.10.20.230">
    <property type="entry name" value="Doublecortin domain"/>
    <property type="match status" value="1"/>
</dbReference>
<dbReference type="InterPro" id="IPR003533">
    <property type="entry name" value="Doublecortin_dom"/>
</dbReference>
<dbReference type="InterPro" id="IPR036572">
    <property type="entry name" value="Doublecortin_dom_sf"/>
</dbReference>
<dbReference type="InterPro" id="IPR008907">
    <property type="entry name" value="TPP/p25"/>
</dbReference>
<dbReference type="Pfam" id="PF03607">
    <property type="entry name" value="DCX"/>
    <property type="match status" value="1"/>
</dbReference>
<dbReference type="Pfam" id="PF05517">
    <property type="entry name" value="p25-alpha"/>
    <property type="match status" value="1"/>
</dbReference>
<dbReference type="SMART" id="SM00537">
    <property type="entry name" value="DCX"/>
    <property type="match status" value="1"/>
</dbReference>
<dbReference type="SUPFAM" id="SSF89837">
    <property type="entry name" value="Doublecortin (DC)"/>
    <property type="match status" value="1"/>
</dbReference>
<dbReference type="PROSITE" id="PS50309">
    <property type="entry name" value="DC"/>
    <property type="match status" value="1"/>
</dbReference>
<sequence>MACGIPWKLARRDELMATRQAERPGEYFPPPYPPCPPTVVTPLRTSAYDFPEATFVTRPCLPAKKATGHKNVFERLTDTAYYTGSHRERFDEFGNGRGIAGREYLYAYDGLTESPSRCHEVYSSVIKRPRKPVVTPGTLGIQRFGVQIPAPRLMWLYRNGDKHDDGTPFFVRPYIKSMESLYQQITKEITPIAGPVRRIFDQNFRVITDLDDIVDGAKYLCTSGEPPAAYDRLEKFLSEWVIQKSQTKVPSQFFVV</sequence>
<feature type="chain" id="PRO_0000455112" description="Doublecortin domain-containing protein">
    <location>
        <begin position="1"/>
        <end position="256"/>
    </location>
</feature>
<feature type="domain" description="Doublecortin" evidence="1">
    <location>
        <begin position="152"/>
        <end position="226"/>
    </location>
</feature>
<feature type="region of interest" description="Partial p25alpha domain" evidence="3">
    <location>
        <begin position="71"/>
        <end position="103"/>
    </location>
</feature>
<feature type="strand" evidence="10">
    <location>
        <begin position="152"/>
        <end position="158"/>
    </location>
</feature>
<feature type="strand" evidence="10">
    <location>
        <begin position="167"/>
        <end position="171"/>
    </location>
</feature>
<feature type="helix" evidence="10">
    <location>
        <begin position="178"/>
        <end position="189"/>
    </location>
</feature>
<feature type="strand" evidence="10">
    <location>
        <begin position="198"/>
        <end position="200"/>
    </location>
</feature>
<feature type="helix" evidence="10">
    <location>
        <begin position="210"/>
        <end position="212"/>
    </location>
</feature>
<feature type="strand" evidence="10">
    <location>
        <begin position="217"/>
        <end position="225"/>
    </location>
</feature>
<feature type="helix" evidence="10">
    <location>
        <begin position="230"/>
        <end position="232"/>
    </location>
</feature>
<feature type="helix" evidence="10">
    <location>
        <begin position="234"/>
        <end position="237"/>
    </location>
</feature>
<keyword id="KW-0002">3D-structure</keyword>
<keyword id="KW-0963">Cytoplasm</keyword>
<keyword id="KW-0206">Cytoskeleton</keyword>
<keyword id="KW-1185">Reference proteome</keyword>
<evidence type="ECO:0000255" key="1">
    <source>
        <dbReference type="PROSITE-ProRule" id="PRU00072"/>
    </source>
</evidence>
<evidence type="ECO:0000269" key="2">
    <source>
    </source>
</evidence>
<evidence type="ECO:0000269" key="3">
    <source>
    </source>
</evidence>
<evidence type="ECO:0000303" key="4">
    <source>
    </source>
</evidence>
<evidence type="ECO:0000305" key="5"/>
<evidence type="ECO:0000312" key="6">
    <source>
        <dbReference type="EMBL" id="CEL74611.1"/>
    </source>
</evidence>
<evidence type="ECO:0000312" key="7">
    <source>
        <dbReference type="EMBL" id="ESS35450.1"/>
    </source>
</evidence>
<evidence type="ECO:0000312" key="8">
    <source>
        <dbReference type="Proteomes" id="UP000002226"/>
    </source>
</evidence>
<evidence type="ECO:0007744" key="9">
    <source>
        <dbReference type="PDB" id="6B4A"/>
    </source>
</evidence>
<evidence type="ECO:0007829" key="10">
    <source>
        <dbReference type="PDB" id="6B4A"/>
    </source>
</evidence>
<comment type="function">
    <text evidence="2 3">Specifically required in the formation and maintenance of the conoid fibers; the conoid is a component of the cytoskeletal apical complex, which is composed of a left-handed spiral of 14 fibers made from a nontubular tubulin polymer (PubMed:27932494). Promotes the organization, curvature, and stability of the conoid fibers, and probably bridges other conoid components to the tubulin core (PubMed:27932494, PubMed:32111164).</text>
</comment>
<comment type="subcellular location">
    <subcellularLocation>
        <location evidence="2 3">Cytoplasm</location>
        <location evidence="2 3">Cytoskeleton</location>
    </subcellularLocation>
    <text evidence="2 3">Localizes along the tubulin-containing conoid fibers; the conoid is a component of the cytoskeletal apical complex, which is composed of a left-handed spiral of 14 fibers made from a nontubular tubulin polymer (PubMed:27932494, PubMed:32111164). During early daughter development, localizes to the center of a five-petaled flower-like tubulin structure in the nascent daughter apical cytoskeleton (PubMed:27932494).</text>
</comment>
<comment type="developmental stage">
    <text evidence="2">Expressed in tachyzoites (at protein level).</text>
</comment>
<comment type="domain">
    <text evidence="3">The doublecortin is involved in the binding to microtubules; however, it is not sufficient by itself and requires the partial p25alpha domain.</text>
</comment>
<comment type="domain">
    <text evidence="3">The partial p25 alpha domain binds to microtubules.</text>
</comment>
<comment type="disruption phenotype">
    <text evidence="2">Reduced tachyzoite growth and host invasion (PubMed:27932494). Loss of tubulin at the apical complex (PubMed:27932494). Abnormal conoid morphology characterized by a shorter and less rectangular structure a weaker or absent basket-weave stripe pattern (PubMed:27932494). Cortical microtubules, the mitotic spindle, spindle pole, and centrioles are normal (PubMed:27932494).</text>
</comment>
<name>DCXH_TOXGV</name>
<reference evidence="7" key="1">
    <citation type="submission" date="2013-08" db="EMBL/GenBank/DDBJ databases">
        <authorList>
            <person name="Gandolfi B."/>
            <person name="Grahn R.A."/>
        </authorList>
    </citation>
    <scope>NUCLEOTIDE SEQUENCE [GENOMIC DNA]</scope>
    <source>
        <strain evidence="7">ATCC 50861 / VEG</strain>
    </source>
</reference>
<reference evidence="8" key="2">
    <citation type="submission" date="2008-03" db="EMBL/GenBank/DDBJ databases">
        <title>Annotation of Toxoplasma gondii VEG.</title>
        <authorList>
            <person name="Lorenzi H."/>
            <person name="Inman J."/>
            <person name="Amedeo P."/>
            <person name="Brunk B."/>
            <person name="Roos D."/>
            <person name="Caler E."/>
        </authorList>
    </citation>
    <scope>NUCLEOTIDE SEQUENCE [LARGE SCALE GENOMIC DNA]</scope>
    <source>
        <strain evidence="8">ATCC 50861 / VEG</strain>
    </source>
</reference>
<reference evidence="6" key="3">
    <citation type="journal article" date="2015" name="PLoS ONE">
        <title>Comprehensive Evaluation of Toxoplasma gondii VEG and Neospora caninum LIV Genomes with Tachyzoite Stage Transcriptome and Proteome Defines Novel Transcript Features.</title>
        <authorList>
            <person name="Ramaprasad A."/>
            <person name="Mourier T."/>
            <person name="Naeem R."/>
            <person name="Malas T.B."/>
            <person name="Moussa E."/>
            <person name="Panigrahi A."/>
            <person name="Vermont S.J."/>
            <person name="Otto T.D."/>
            <person name="Wastling J."/>
            <person name="Pain A."/>
        </authorList>
    </citation>
    <scope>NUCLEOTIDE SEQUENCE [LARGE SCALE GENOMIC DNA]</scope>
    <source>
        <strain evidence="6">ATCC 50861 / VEG</strain>
    </source>
</reference>
<reference evidence="5" key="4">
    <citation type="journal article" date="2017" name="Mol. Biol. Cell">
        <title>Loss of a doublecortin (DCX)-domain protein causes structural defects in a tubulin-based organelle of Toxoplasma gondii and impairs host-cell invasion.</title>
        <authorList>
            <person name="Nagayasu E."/>
            <person name="Hwang Y.C."/>
            <person name="Liu J."/>
            <person name="Murray J.M."/>
            <person name="Hu K."/>
        </authorList>
    </citation>
    <scope>FUNCTION</scope>
    <scope>SUBCELLULAR LOCATION</scope>
    <scope>DEVELOPMENTAL STAGE</scope>
    <scope>DISRUPTION PHENOTYPE</scope>
    <source>
        <strain evidence="2">RH</strain>
    </source>
</reference>
<reference evidence="9" key="5">
    <citation type="journal article" date="2020" name="BMC Mol. Cell Biol.">
        <title>A doublecortin-domain protein of Toxoplasma and its orthologues bind to and modify the structure and organization of tubulin polymers.</title>
        <authorList>
            <person name="Leung J.M."/>
            <person name="Nagayasu E."/>
            <person name="Hwang Y.C."/>
            <person name="Liu J."/>
            <person name="Pierce P.G."/>
            <person name="Phan I.Q."/>
            <person name="Prentice R.A."/>
            <person name="Murray J.M."/>
            <person name="Hu K."/>
        </authorList>
    </citation>
    <scope>X-RAY CRYSTALLOGRAPHY (2.00 ANGSTROMS) OF 148-243</scope>
    <scope>FUNCTION</scope>
    <scope>SUBCELLULAR LOCATION</scope>
    <scope>DOMAIN</scope>
    <scope>DISRUPTION PHENOTYPE</scope>
</reference>